<organism>
    <name type="scientific">Prionace glauca</name>
    <name type="common">Blue shark</name>
    <name type="synonym">Squalus glaucus</name>
    <dbReference type="NCBI Taxonomy" id="7815"/>
    <lineage>
        <taxon>Eukaryota</taxon>
        <taxon>Metazoa</taxon>
        <taxon>Chordata</taxon>
        <taxon>Craniata</taxon>
        <taxon>Vertebrata</taxon>
        <taxon>Chondrichthyes</taxon>
        <taxon>Elasmobranchii</taxon>
        <taxon>Galeomorphii</taxon>
        <taxon>Galeoidea</taxon>
        <taxon>Carcharhiniformes</taxon>
        <taxon>Carcharhinidae</taxon>
        <taxon>Prionace</taxon>
    </lineage>
</organism>
<proteinExistence type="evidence at protein level"/>
<accession>P11418</accession>
<gene>
    <name type="primary">sod1</name>
</gene>
<keyword id="KW-0049">Antioxidant</keyword>
<keyword id="KW-0186">Copper</keyword>
<keyword id="KW-0963">Cytoplasm</keyword>
<keyword id="KW-0903">Direct protein sequencing</keyword>
<keyword id="KW-1015">Disulfide bond</keyword>
<keyword id="KW-0449">Lipoprotein</keyword>
<keyword id="KW-0479">Metal-binding</keyword>
<keyword id="KW-0539">Nucleus</keyword>
<keyword id="KW-0560">Oxidoreductase</keyword>
<keyword id="KW-0564">Palmitate</keyword>
<keyword id="KW-0862">Zinc</keyword>
<protein>
    <recommendedName>
        <fullName>Superoxide dismutase [Cu-Zn]</fullName>
        <ecNumber>1.15.1.1</ecNumber>
    </recommendedName>
</protein>
<comment type="function">
    <text>Destroys radicals which are normally produced within the cells and which are toxic to biological systems.</text>
</comment>
<comment type="catalytic activity">
    <reaction>
        <text>2 superoxide + 2 H(+) = H2O2 + O2</text>
        <dbReference type="Rhea" id="RHEA:20696"/>
        <dbReference type="ChEBI" id="CHEBI:15378"/>
        <dbReference type="ChEBI" id="CHEBI:15379"/>
        <dbReference type="ChEBI" id="CHEBI:16240"/>
        <dbReference type="ChEBI" id="CHEBI:18421"/>
        <dbReference type="EC" id="1.15.1.1"/>
    </reaction>
</comment>
<comment type="cofactor">
    <cofactor>
        <name>Cu cation</name>
        <dbReference type="ChEBI" id="CHEBI:23378"/>
    </cofactor>
    <text>Binds 1 copper ion per subunit.</text>
</comment>
<comment type="cofactor">
    <cofactor>
        <name>Zn(2+)</name>
        <dbReference type="ChEBI" id="CHEBI:29105"/>
    </cofactor>
    <text>Binds 1 zinc ion per subunit.</text>
</comment>
<comment type="subunit">
    <text>Homodimer.</text>
</comment>
<comment type="subcellular location">
    <subcellularLocation>
        <location>Cytoplasm</location>
    </subcellularLocation>
    <subcellularLocation>
        <location evidence="1">Nucleus</location>
    </subcellularLocation>
</comment>
<comment type="similarity">
    <text evidence="2">Belongs to the Cu-Zn superoxide dismutase family.</text>
</comment>
<feature type="chain" id="PRO_0000164074" description="Superoxide dismutase [Cu-Zn]">
    <location>
        <begin position="1"/>
        <end position="152"/>
    </location>
</feature>
<feature type="binding site">
    <location>
        <position position="44"/>
    </location>
    <ligand>
        <name>Cu cation</name>
        <dbReference type="ChEBI" id="CHEBI:23378"/>
        <note>catalytic</note>
    </ligand>
</feature>
<feature type="binding site">
    <location>
        <position position="46"/>
    </location>
    <ligand>
        <name>Cu cation</name>
        <dbReference type="ChEBI" id="CHEBI:23378"/>
        <note>catalytic</note>
    </ligand>
</feature>
<feature type="binding site">
    <location>
        <position position="61"/>
    </location>
    <ligand>
        <name>Cu cation</name>
        <dbReference type="ChEBI" id="CHEBI:23378"/>
        <note>catalytic</note>
    </ligand>
</feature>
<feature type="binding site">
    <location>
        <position position="61"/>
    </location>
    <ligand>
        <name>Zn(2+)</name>
        <dbReference type="ChEBI" id="CHEBI:29105"/>
        <note>structural</note>
    </ligand>
</feature>
<feature type="binding site">
    <location>
        <position position="69"/>
    </location>
    <ligand>
        <name>Zn(2+)</name>
        <dbReference type="ChEBI" id="CHEBI:29105"/>
        <note>structural</note>
    </ligand>
</feature>
<feature type="binding site">
    <location>
        <position position="78"/>
    </location>
    <ligand>
        <name>Zn(2+)</name>
        <dbReference type="ChEBI" id="CHEBI:29105"/>
        <note>structural</note>
    </ligand>
</feature>
<feature type="binding site">
    <location>
        <position position="81"/>
    </location>
    <ligand>
        <name>Zn(2+)</name>
        <dbReference type="ChEBI" id="CHEBI:29105"/>
        <note>structural</note>
    </ligand>
</feature>
<feature type="binding site">
    <location>
        <position position="118"/>
    </location>
    <ligand>
        <name>Cu cation</name>
        <dbReference type="ChEBI" id="CHEBI:23378"/>
        <note>catalytic</note>
    </ligand>
</feature>
<feature type="lipid moiety-binding region" description="S-palmitoyl cysteine" evidence="1">
    <location>
        <position position="5"/>
    </location>
</feature>
<feature type="disulfide bond" evidence="1">
    <location>
        <begin position="55"/>
        <end position="144"/>
    </location>
</feature>
<name>SODC_PRIGL</name>
<dbReference type="EC" id="1.15.1.1"/>
<dbReference type="PIR" id="S04623">
    <property type="entry name" value="S04623"/>
</dbReference>
<dbReference type="SMR" id="P11418"/>
<dbReference type="GO" id="GO:0005737">
    <property type="term" value="C:cytoplasm"/>
    <property type="evidence" value="ECO:0007669"/>
    <property type="project" value="UniProtKB-SubCell"/>
</dbReference>
<dbReference type="GO" id="GO:0005634">
    <property type="term" value="C:nucleus"/>
    <property type="evidence" value="ECO:0007669"/>
    <property type="project" value="UniProtKB-SubCell"/>
</dbReference>
<dbReference type="GO" id="GO:0005507">
    <property type="term" value="F:copper ion binding"/>
    <property type="evidence" value="ECO:0007669"/>
    <property type="project" value="InterPro"/>
</dbReference>
<dbReference type="GO" id="GO:0004784">
    <property type="term" value="F:superoxide dismutase activity"/>
    <property type="evidence" value="ECO:0007669"/>
    <property type="project" value="UniProtKB-EC"/>
</dbReference>
<dbReference type="CDD" id="cd00305">
    <property type="entry name" value="Cu-Zn_Superoxide_Dismutase"/>
    <property type="match status" value="1"/>
</dbReference>
<dbReference type="FunFam" id="2.60.40.200:FF:000001">
    <property type="entry name" value="Superoxide dismutase [Cu-Zn]"/>
    <property type="match status" value="1"/>
</dbReference>
<dbReference type="Gene3D" id="2.60.40.200">
    <property type="entry name" value="Superoxide dismutase, copper/zinc binding domain"/>
    <property type="match status" value="1"/>
</dbReference>
<dbReference type="InterPro" id="IPR036423">
    <property type="entry name" value="SOD-like_Cu/Zn_dom_sf"/>
</dbReference>
<dbReference type="InterPro" id="IPR024134">
    <property type="entry name" value="SOD_Cu/Zn_/chaperone"/>
</dbReference>
<dbReference type="InterPro" id="IPR018152">
    <property type="entry name" value="SOD_Cu/Zn_BS"/>
</dbReference>
<dbReference type="InterPro" id="IPR001424">
    <property type="entry name" value="SOD_Cu_Zn_dom"/>
</dbReference>
<dbReference type="PANTHER" id="PTHR10003">
    <property type="entry name" value="SUPEROXIDE DISMUTASE CU-ZN -RELATED"/>
    <property type="match status" value="1"/>
</dbReference>
<dbReference type="Pfam" id="PF00080">
    <property type="entry name" value="Sod_Cu"/>
    <property type="match status" value="1"/>
</dbReference>
<dbReference type="PRINTS" id="PR00068">
    <property type="entry name" value="CUZNDISMTASE"/>
</dbReference>
<dbReference type="SUPFAM" id="SSF49329">
    <property type="entry name" value="Cu,Zn superoxide dismutase-like"/>
    <property type="match status" value="1"/>
</dbReference>
<dbReference type="PROSITE" id="PS00087">
    <property type="entry name" value="SOD_CU_ZN_1"/>
    <property type="match status" value="1"/>
</dbReference>
<dbReference type="PROSITE" id="PS00332">
    <property type="entry name" value="SOD_CU_ZN_2"/>
    <property type="match status" value="1"/>
</dbReference>
<evidence type="ECO:0000250" key="1"/>
<evidence type="ECO:0000305" key="2"/>
<reference key="1">
    <citation type="journal article" date="1989" name="FEBS Lett.">
        <title>Substitution of arginine for lysine 134 alters electrostatic parameters of the active site in shark Cu,Zn superoxide dismutase.</title>
        <authorList>
            <person name="Calabrese L."/>
            <person name="Polticelli F."/>
            <person name="O'Neill P."/>
            <person name="Galtieri A."/>
            <person name="Barra D."/>
            <person name="Schinina M.E."/>
            <person name="Bossa F."/>
        </authorList>
    </citation>
    <scope>PROTEIN SEQUENCE</scope>
</reference>
<sequence length="152" mass="15841">MKAVCVLKGTGEVTGTVLFEQAADGPVTLKGSITGLTPGKHGFHVHAFGDNTNGCISAGPHYNPFSKNHGGPDDEERHVGDLGNVEANGNGVAEFEIKDRQLHLSGERSIIGRTLVVHEKEDDLGKGGDEESLRTGNAGSRLACGVIGIAKD</sequence>